<keyword id="KW-0963">Cytoplasm</keyword>
<keyword id="KW-0690">Ribosome biogenesis</keyword>
<reference key="1">
    <citation type="submission" date="2008-05" db="EMBL/GenBank/DDBJ databases">
        <title>Complete sequence of Rhodopseudomonas palustris TIE-1.</title>
        <authorList>
            <consortium name="US DOE Joint Genome Institute"/>
            <person name="Lucas S."/>
            <person name="Copeland A."/>
            <person name="Lapidus A."/>
            <person name="Glavina del Rio T."/>
            <person name="Dalin E."/>
            <person name="Tice H."/>
            <person name="Pitluck S."/>
            <person name="Chain P."/>
            <person name="Malfatti S."/>
            <person name="Shin M."/>
            <person name="Vergez L."/>
            <person name="Lang D."/>
            <person name="Schmutz J."/>
            <person name="Larimer F."/>
            <person name="Land M."/>
            <person name="Hauser L."/>
            <person name="Kyrpides N."/>
            <person name="Mikhailova N."/>
            <person name="Emerson D."/>
            <person name="Newman D.K."/>
            <person name="Roden E."/>
            <person name="Richardson P."/>
        </authorList>
    </citation>
    <scope>NUCLEOTIDE SEQUENCE [LARGE SCALE GENOMIC DNA]</scope>
    <source>
        <strain>TIE-1</strain>
    </source>
</reference>
<dbReference type="EMBL" id="CP001096">
    <property type="protein sequence ID" value="ACE98999.1"/>
    <property type="molecule type" value="Genomic_DNA"/>
</dbReference>
<dbReference type="RefSeq" id="WP_011156003.1">
    <property type="nucleotide sequence ID" value="NC_011004.1"/>
</dbReference>
<dbReference type="SMR" id="B3QAB3"/>
<dbReference type="GeneID" id="66891450"/>
<dbReference type="KEGG" id="rpt:Rpal_0439"/>
<dbReference type="HOGENOM" id="CLU_089475_1_0_5"/>
<dbReference type="OrthoDB" id="9805051at2"/>
<dbReference type="Proteomes" id="UP000001725">
    <property type="component" value="Chromosome"/>
</dbReference>
<dbReference type="GO" id="GO:0005829">
    <property type="term" value="C:cytosol"/>
    <property type="evidence" value="ECO:0007669"/>
    <property type="project" value="TreeGrafter"/>
</dbReference>
<dbReference type="GO" id="GO:0043024">
    <property type="term" value="F:ribosomal small subunit binding"/>
    <property type="evidence" value="ECO:0007669"/>
    <property type="project" value="TreeGrafter"/>
</dbReference>
<dbReference type="GO" id="GO:0030490">
    <property type="term" value="P:maturation of SSU-rRNA"/>
    <property type="evidence" value="ECO:0007669"/>
    <property type="project" value="UniProtKB-UniRule"/>
</dbReference>
<dbReference type="Gene3D" id="3.30.300.20">
    <property type="match status" value="1"/>
</dbReference>
<dbReference type="HAMAP" id="MF_00003">
    <property type="entry name" value="RbfA"/>
    <property type="match status" value="1"/>
</dbReference>
<dbReference type="InterPro" id="IPR015946">
    <property type="entry name" value="KH_dom-like_a/b"/>
</dbReference>
<dbReference type="InterPro" id="IPR000238">
    <property type="entry name" value="RbfA"/>
</dbReference>
<dbReference type="InterPro" id="IPR023799">
    <property type="entry name" value="RbfA_dom_sf"/>
</dbReference>
<dbReference type="InterPro" id="IPR020053">
    <property type="entry name" value="Ribosome-bd_factorA_CS"/>
</dbReference>
<dbReference type="NCBIfam" id="NF001802">
    <property type="entry name" value="PRK00521.2-5"/>
    <property type="match status" value="1"/>
</dbReference>
<dbReference type="NCBIfam" id="TIGR00082">
    <property type="entry name" value="rbfA"/>
    <property type="match status" value="1"/>
</dbReference>
<dbReference type="PANTHER" id="PTHR33515">
    <property type="entry name" value="RIBOSOME-BINDING FACTOR A, CHLOROPLASTIC-RELATED"/>
    <property type="match status" value="1"/>
</dbReference>
<dbReference type="PANTHER" id="PTHR33515:SF1">
    <property type="entry name" value="RIBOSOME-BINDING FACTOR A, CHLOROPLASTIC-RELATED"/>
    <property type="match status" value="1"/>
</dbReference>
<dbReference type="Pfam" id="PF02033">
    <property type="entry name" value="RBFA"/>
    <property type="match status" value="1"/>
</dbReference>
<dbReference type="SUPFAM" id="SSF89919">
    <property type="entry name" value="Ribosome-binding factor A, RbfA"/>
    <property type="match status" value="1"/>
</dbReference>
<dbReference type="PROSITE" id="PS01319">
    <property type="entry name" value="RBFA"/>
    <property type="match status" value="1"/>
</dbReference>
<name>RBFA_RHOPT</name>
<sequence length="137" mass="15483">MSRQHQKSSPPGGSTRSLRVGELIRHAVAEILAQGGVHDPVLESHLVTVPEVRMSPDLKLATIYVMPLGGRDEKLVIDALEHHKRFLRGEIAHRVNLKFAPELRFRIDERFAEAERIDKLLRSPAVQKDLEPNSDQD</sequence>
<gene>
    <name evidence="1" type="primary">rbfA</name>
    <name type="ordered locus">Rpal_0439</name>
</gene>
<comment type="function">
    <text evidence="1">One of several proteins that assist in the late maturation steps of the functional core of the 30S ribosomal subunit. Associates with free 30S ribosomal subunits (but not with 30S subunits that are part of 70S ribosomes or polysomes). Required for efficient processing of 16S rRNA. May interact with the 5'-terminal helix region of 16S rRNA.</text>
</comment>
<comment type="subunit">
    <text evidence="1">Monomer. Binds 30S ribosomal subunits, but not 50S ribosomal subunits or 70S ribosomes.</text>
</comment>
<comment type="subcellular location">
    <subcellularLocation>
        <location evidence="1">Cytoplasm</location>
    </subcellularLocation>
</comment>
<comment type="similarity">
    <text evidence="1">Belongs to the RbfA family.</text>
</comment>
<organism>
    <name type="scientific">Rhodopseudomonas palustris (strain TIE-1)</name>
    <dbReference type="NCBI Taxonomy" id="395960"/>
    <lineage>
        <taxon>Bacteria</taxon>
        <taxon>Pseudomonadati</taxon>
        <taxon>Pseudomonadota</taxon>
        <taxon>Alphaproteobacteria</taxon>
        <taxon>Hyphomicrobiales</taxon>
        <taxon>Nitrobacteraceae</taxon>
        <taxon>Rhodopseudomonas</taxon>
    </lineage>
</organism>
<accession>B3QAB3</accession>
<feature type="chain" id="PRO_1000088922" description="Ribosome-binding factor A">
    <location>
        <begin position="1"/>
        <end position="137"/>
    </location>
</feature>
<evidence type="ECO:0000255" key="1">
    <source>
        <dbReference type="HAMAP-Rule" id="MF_00003"/>
    </source>
</evidence>
<proteinExistence type="inferred from homology"/>
<protein>
    <recommendedName>
        <fullName evidence="1">Ribosome-binding factor A</fullName>
    </recommendedName>
</protein>